<comment type="function">
    <text evidence="1">Forms part of the ribosomal stalk which helps the ribosome interact with GTP-bound translation factors. Is thus essential for accurate translation.</text>
</comment>
<comment type="subunit">
    <text evidence="1">Homodimer. Part of the ribosomal stalk of the 50S ribosomal subunit. Forms a multimeric L10(L12)X complex, where L10 forms an elongated spine to which 2 to 4 L12 dimers bind in a sequential fashion. Binds GTP-bound translation factors.</text>
</comment>
<comment type="subcellular location">
    <subcellularLocation>
        <location>Plastid</location>
        <location>Chloroplast</location>
    </subcellularLocation>
</comment>
<comment type="similarity">
    <text evidence="1">Belongs to the bacterial ribosomal protein bL12 family.</text>
</comment>
<protein>
    <recommendedName>
        <fullName evidence="1">Large ribosomal subunit protein bL12c</fullName>
    </recommendedName>
    <alternativeName>
        <fullName evidence="3">50S ribosomal protein L12, chloroplastic</fullName>
    </alternativeName>
</protein>
<geneLocation type="chloroplast"/>
<accession>A0T0Q7</accession>
<feature type="chain" id="PRO_0000276332" description="Large ribosomal subunit protein bL12c">
    <location>
        <begin position="1"/>
        <end position="128"/>
    </location>
</feature>
<feature type="region of interest" description="Disordered" evidence="2">
    <location>
        <begin position="103"/>
        <end position="128"/>
    </location>
</feature>
<feature type="compositionally biased region" description="Basic and acidic residues" evidence="2">
    <location>
        <begin position="106"/>
        <end position="122"/>
    </location>
</feature>
<sequence length="128" mass="13429">MSEKINQIVEELKTLTLLEASELVAAIEETFGVDASASTGGGVVMAVAPAAAEEVEEKTEFTVMLDEVPADKKIAVLKVVRTLTGLGLKEAKELVESTPKMVQEGLGKDAAEDAKKQIEDAGGKVSLT</sequence>
<reference key="1">
    <citation type="journal article" date="2007" name="Mol. Genet. Genomics">
        <title>Chloroplast genomes of the diatoms Phaeodactylum tricornutum and Thalassiosira pseudonana: comparison with other plastid genomes of the red lineage.</title>
        <authorList>
            <person name="Oudot-Le Secq M.-P."/>
            <person name="Grimwood J."/>
            <person name="Shapiro H."/>
            <person name="Armbrust E.V."/>
            <person name="Bowler C."/>
            <person name="Green B.R."/>
        </authorList>
    </citation>
    <scope>NUCLEOTIDE SEQUENCE [LARGE SCALE GENOMIC DNA]</scope>
    <source>
        <strain>CCMP1335 / NEPCC58 / CCAP 1085/12</strain>
    </source>
</reference>
<organism>
    <name type="scientific">Thalassiosira pseudonana</name>
    <name type="common">Marine diatom</name>
    <name type="synonym">Cyclotella nana</name>
    <dbReference type="NCBI Taxonomy" id="35128"/>
    <lineage>
        <taxon>Eukaryota</taxon>
        <taxon>Sar</taxon>
        <taxon>Stramenopiles</taxon>
        <taxon>Ochrophyta</taxon>
        <taxon>Bacillariophyta</taxon>
        <taxon>Coscinodiscophyceae</taxon>
        <taxon>Thalassiosirophycidae</taxon>
        <taxon>Thalassiosirales</taxon>
        <taxon>Thalassiosiraceae</taxon>
        <taxon>Thalassiosira</taxon>
    </lineage>
</organism>
<dbReference type="EMBL" id="EF067921">
    <property type="protein sequence ID" value="ABK20742.1"/>
    <property type="molecule type" value="Genomic_DNA"/>
</dbReference>
<dbReference type="RefSeq" id="YP_874519.1">
    <property type="nucleotide sequence ID" value="NC_008589.1"/>
</dbReference>
<dbReference type="SMR" id="A0T0Q7"/>
<dbReference type="FunCoup" id="A0T0Q7">
    <property type="interactions" value="139"/>
</dbReference>
<dbReference type="STRING" id="35128.A0T0Q7"/>
<dbReference type="GeneID" id="4524725"/>
<dbReference type="InParanoid" id="A0T0Q7"/>
<dbReference type="GO" id="GO:0009507">
    <property type="term" value="C:chloroplast"/>
    <property type="evidence" value="ECO:0007669"/>
    <property type="project" value="UniProtKB-SubCell"/>
</dbReference>
<dbReference type="GO" id="GO:0022625">
    <property type="term" value="C:cytosolic large ribosomal subunit"/>
    <property type="evidence" value="ECO:0000318"/>
    <property type="project" value="GO_Central"/>
</dbReference>
<dbReference type="GO" id="GO:0003729">
    <property type="term" value="F:mRNA binding"/>
    <property type="evidence" value="ECO:0000318"/>
    <property type="project" value="GO_Central"/>
</dbReference>
<dbReference type="GO" id="GO:0003735">
    <property type="term" value="F:structural constituent of ribosome"/>
    <property type="evidence" value="ECO:0000318"/>
    <property type="project" value="GO_Central"/>
</dbReference>
<dbReference type="GO" id="GO:0006412">
    <property type="term" value="P:translation"/>
    <property type="evidence" value="ECO:0000318"/>
    <property type="project" value="GO_Central"/>
</dbReference>
<dbReference type="CDD" id="cd00387">
    <property type="entry name" value="Ribosomal_L7_L12"/>
    <property type="match status" value="1"/>
</dbReference>
<dbReference type="FunFam" id="3.30.1390.10:FF:000001">
    <property type="entry name" value="50S ribosomal protein L7/L12"/>
    <property type="match status" value="1"/>
</dbReference>
<dbReference type="Gene3D" id="3.30.1390.10">
    <property type="match status" value="1"/>
</dbReference>
<dbReference type="Gene3D" id="1.20.5.710">
    <property type="entry name" value="Single helix bin"/>
    <property type="match status" value="1"/>
</dbReference>
<dbReference type="HAMAP" id="MF_00368">
    <property type="entry name" value="Ribosomal_bL12"/>
    <property type="match status" value="1"/>
</dbReference>
<dbReference type="InterPro" id="IPR000206">
    <property type="entry name" value="Ribosomal_bL12"/>
</dbReference>
<dbReference type="InterPro" id="IPR013823">
    <property type="entry name" value="Ribosomal_bL12_C"/>
</dbReference>
<dbReference type="InterPro" id="IPR014719">
    <property type="entry name" value="Ribosomal_bL12_C/ClpS-like"/>
</dbReference>
<dbReference type="InterPro" id="IPR008932">
    <property type="entry name" value="Ribosomal_bL12_oligo"/>
</dbReference>
<dbReference type="InterPro" id="IPR036235">
    <property type="entry name" value="Ribosomal_bL12_oligo_N_sf"/>
</dbReference>
<dbReference type="NCBIfam" id="TIGR00855">
    <property type="entry name" value="L12"/>
    <property type="match status" value="1"/>
</dbReference>
<dbReference type="PANTHER" id="PTHR45987">
    <property type="entry name" value="39S RIBOSOMAL PROTEIN L12"/>
    <property type="match status" value="1"/>
</dbReference>
<dbReference type="PANTHER" id="PTHR45987:SF4">
    <property type="entry name" value="LARGE RIBOSOMAL SUBUNIT PROTEIN BL12M"/>
    <property type="match status" value="1"/>
</dbReference>
<dbReference type="Pfam" id="PF00542">
    <property type="entry name" value="Ribosomal_L12"/>
    <property type="match status" value="1"/>
</dbReference>
<dbReference type="Pfam" id="PF16320">
    <property type="entry name" value="Ribosomal_L12_N"/>
    <property type="match status" value="1"/>
</dbReference>
<dbReference type="SUPFAM" id="SSF54736">
    <property type="entry name" value="ClpS-like"/>
    <property type="match status" value="1"/>
</dbReference>
<dbReference type="SUPFAM" id="SSF48300">
    <property type="entry name" value="Ribosomal protein L7/12, oligomerisation (N-terminal) domain"/>
    <property type="match status" value="1"/>
</dbReference>
<name>RK12_THAPS</name>
<gene>
    <name evidence="1" type="primary">rpl12</name>
</gene>
<proteinExistence type="inferred from homology"/>
<keyword id="KW-0150">Chloroplast</keyword>
<keyword id="KW-0934">Plastid</keyword>
<keyword id="KW-0687">Ribonucleoprotein</keyword>
<keyword id="KW-0689">Ribosomal protein</keyword>
<evidence type="ECO:0000255" key="1">
    <source>
        <dbReference type="HAMAP-Rule" id="MF_00368"/>
    </source>
</evidence>
<evidence type="ECO:0000256" key="2">
    <source>
        <dbReference type="SAM" id="MobiDB-lite"/>
    </source>
</evidence>
<evidence type="ECO:0000305" key="3"/>